<proteinExistence type="inferred from homology"/>
<evidence type="ECO:0000255" key="1">
    <source>
        <dbReference type="HAMAP-Rule" id="MF_00385"/>
    </source>
</evidence>
<evidence type="ECO:0000305" key="2"/>
<keyword id="KW-1185">Reference proteome</keyword>
<keyword id="KW-0687">Ribonucleoprotein</keyword>
<keyword id="KW-0689">Ribosomal protein</keyword>
<accession>B1KI68</accession>
<sequence length="83" mass="9343">MVTIRLARGGAKKRPFYNIVVADSRNARDGRFIERVGFFNPMARGQEETLRLDLDRVEHWVTNGAGTSERVAKLIKDARKAAA</sequence>
<gene>
    <name evidence="1" type="primary">rpsP</name>
    <name type="ordered locus">Swoo_1254</name>
</gene>
<feature type="chain" id="PRO_1000196473" description="Small ribosomal subunit protein bS16">
    <location>
        <begin position="1"/>
        <end position="83"/>
    </location>
</feature>
<protein>
    <recommendedName>
        <fullName evidence="1">Small ribosomal subunit protein bS16</fullName>
    </recommendedName>
    <alternativeName>
        <fullName evidence="2">30S ribosomal protein S16</fullName>
    </alternativeName>
</protein>
<reference key="1">
    <citation type="submission" date="2008-02" db="EMBL/GenBank/DDBJ databases">
        <title>Complete sequence of Shewanella woodyi ATCC 51908.</title>
        <authorList>
            <consortium name="US DOE Joint Genome Institute"/>
            <person name="Copeland A."/>
            <person name="Lucas S."/>
            <person name="Lapidus A."/>
            <person name="Glavina del Rio T."/>
            <person name="Dalin E."/>
            <person name="Tice H."/>
            <person name="Bruce D."/>
            <person name="Goodwin L."/>
            <person name="Pitluck S."/>
            <person name="Sims D."/>
            <person name="Brettin T."/>
            <person name="Detter J.C."/>
            <person name="Han C."/>
            <person name="Kuske C.R."/>
            <person name="Schmutz J."/>
            <person name="Larimer F."/>
            <person name="Land M."/>
            <person name="Hauser L."/>
            <person name="Kyrpides N."/>
            <person name="Lykidis A."/>
            <person name="Zhao J.-S."/>
            <person name="Richardson P."/>
        </authorList>
    </citation>
    <scope>NUCLEOTIDE SEQUENCE [LARGE SCALE GENOMIC DNA]</scope>
    <source>
        <strain>ATCC 51908 / MS32</strain>
    </source>
</reference>
<comment type="similarity">
    <text evidence="1">Belongs to the bacterial ribosomal protein bS16 family.</text>
</comment>
<organism>
    <name type="scientific">Shewanella woodyi (strain ATCC 51908 / MS32)</name>
    <dbReference type="NCBI Taxonomy" id="392500"/>
    <lineage>
        <taxon>Bacteria</taxon>
        <taxon>Pseudomonadati</taxon>
        <taxon>Pseudomonadota</taxon>
        <taxon>Gammaproteobacteria</taxon>
        <taxon>Alteromonadales</taxon>
        <taxon>Shewanellaceae</taxon>
        <taxon>Shewanella</taxon>
    </lineage>
</organism>
<dbReference type="EMBL" id="CP000961">
    <property type="protein sequence ID" value="ACA85546.1"/>
    <property type="molecule type" value="Genomic_DNA"/>
</dbReference>
<dbReference type="RefSeq" id="WP_012323892.1">
    <property type="nucleotide sequence ID" value="NC_010506.1"/>
</dbReference>
<dbReference type="SMR" id="B1KI68"/>
<dbReference type="STRING" id="392500.Swoo_1254"/>
<dbReference type="KEGG" id="swd:Swoo_1254"/>
<dbReference type="eggNOG" id="COG0228">
    <property type="taxonomic scope" value="Bacteria"/>
</dbReference>
<dbReference type="HOGENOM" id="CLU_100590_5_1_6"/>
<dbReference type="Proteomes" id="UP000002168">
    <property type="component" value="Chromosome"/>
</dbReference>
<dbReference type="GO" id="GO:0005737">
    <property type="term" value="C:cytoplasm"/>
    <property type="evidence" value="ECO:0007669"/>
    <property type="project" value="UniProtKB-ARBA"/>
</dbReference>
<dbReference type="GO" id="GO:0015935">
    <property type="term" value="C:small ribosomal subunit"/>
    <property type="evidence" value="ECO:0007669"/>
    <property type="project" value="TreeGrafter"/>
</dbReference>
<dbReference type="GO" id="GO:0003735">
    <property type="term" value="F:structural constituent of ribosome"/>
    <property type="evidence" value="ECO:0007669"/>
    <property type="project" value="InterPro"/>
</dbReference>
<dbReference type="GO" id="GO:0006412">
    <property type="term" value="P:translation"/>
    <property type="evidence" value="ECO:0007669"/>
    <property type="project" value="UniProtKB-UniRule"/>
</dbReference>
<dbReference type="FunFam" id="3.30.1320.10:FF:000001">
    <property type="entry name" value="30S ribosomal protein S16"/>
    <property type="match status" value="1"/>
</dbReference>
<dbReference type="Gene3D" id="3.30.1320.10">
    <property type="match status" value="1"/>
</dbReference>
<dbReference type="HAMAP" id="MF_00385">
    <property type="entry name" value="Ribosomal_bS16"/>
    <property type="match status" value="1"/>
</dbReference>
<dbReference type="InterPro" id="IPR000307">
    <property type="entry name" value="Ribosomal_bS16"/>
</dbReference>
<dbReference type="InterPro" id="IPR020592">
    <property type="entry name" value="Ribosomal_bS16_CS"/>
</dbReference>
<dbReference type="InterPro" id="IPR023803">
    <property type="entry name" value="Ribosomal_bS16_dom_sf"/>
</dbReference>
<dbReference type="NCBIfam" id="TIGR00002">
    <property type="entry name" value="S16"/>
    <property type="match status" value="1"/>
</dbReference>
<dbReference type="PANTHER" id="PTHR12919">
    <property type="entry name" value="30S RIBOSOMAL PROTEIN S16"/>
    <property type="match status" value="1"/>
</dbReference>
<dbReference type="PANTHER" id="PTHR12919:SF20">
    <property type="entry name" value="SMALL RIBOSOMAL SUBUNIT PROTEIN BS16M"/>
    <property type="match status" value="1"/>
</dbReference>
<dbReference type="Pfam" id="PF00886">
    <property type="entry name" value="Ribosomal_S16"/>
    <property type="match status" value="1"/>
</dbReference>
<dbReference type="SUPFAM" id="SSF54565">
    <property type="entry name" value="Ribosomal protein S16"/>
    <property type="match status" value="1"/>
</dbReference>
<dbReference type="PROSITE" id="PS00732">
    <property type="entry name" value="RIBOSOMAL_S16"/>
    <property type="match status" value="1"/>
</dbReference>
<name>RS16_SHEWM</name>